<gene>
    <name evidence="1" type="primary">ihfB</name>
    <name evidence="1" type="synonym">himD</name>
    <name type="ordered locus">PSEEN1493</name>
</gene>
<organism>
    <name type="scientific">Pseudomonas entomophila (strain L48)</name>
    <dbReference type="NCBI Taxonomy" id="384676"/>
    <lineage>
        <taxon>Bacteria</taxon>
        <taxon>Pseudomonadati</taxon>
        <taxon>Pseudomonadota</taxon>
        <taxon>Gammaproteobacteria</taxon>
        <taxon>Pseudomonadales</taxon>
        <taxon>Pseudomonadaceae</taxon>
        <taxon>Pseudomonas</taxon>
    </lineage>
</organism>
<proteinExistence type="inferred from homology"/>
<comment type="function">
    <text evidence="1">This protein is one of the two subunits of integration host factor, a specific DNA-binding protein that functions in genetic recombination as well as in transcriptional and translational control.</text>
</comment>
<comment type="subunit">
    <text evidence="1">Heterodimer of an alpha and a beta chain.</text>
</comment>
<comment type="similarity">
    <text evidence="1">Belongs to the bacterial histone-like protein family.</text>
</comment>
<keyword id="KW-0233">DNA recombination</keyword>
<keyword id="KW-0238">DNA-binding</keyword>
<keyword id="KW-0804">Transcription</keyword>
<keyword id="KW-0805">Transcription regulation</keyword>
<keyword id="KW-0810">Translation regulation</keyword>
<dbReference type="EMBL" id="CT573326">
    <property type="protein sequence ID" value="CAK14362.1"/>
    <property type="molecule type" value="Genomic_DNA"/>
</dbReference>
<dbReference type="RefSeq" id="WP_011532777.1">
    <property type="nucleotide sequence ID" value="NC_008027.1"/>
</dbReference>
<dbReference type="SMR" id="Q1ID97"/>
<dbReference type="STRING" id="384676.PSEEN1493"/>
<dbReference type="GeneID" id="32804745"/>
<dbReference type="KEGG" id="pen:PSEEN1493"/>
<dbReference type="eggNOG" id="COG0776">
    <property type="taxonomic scope" value="Bacteria"/>
</dbReference>
<dbReference type="HOGENOM" id="CLU_105066_2_0_6"/>
<dbReference type="OrthoDB" id="9804203at2"/>
<dbReference type="Proteomes" id="UP000000658">
    <property type="component" value="Chromosome"/>
</dbReference>
<dbReference type="GO" id="GO:0005694">
    <property type="term" value="C:chromosome"/>
    <property type="evidence" value="ECO:0007669"/>
    <property type="project" value="InterPro"/>
</dbReference>
<dbReference type="GO" id="GO:0005829">
    <property type="term" value="C:cytosol"/>
    <property type="evidence" value="ECO:0007669"/>
    <property type="project" value="TreeGrafter"/>
</dbReference>
<dbReference type="GO" id="GO:0003677">
    <property type="term" value="F:DNA binding"/>
    <property type="evidence" value="ECO:0007669"/>
    <property type="project" value="UniProtKB-UniRule"/>
</dbReference>
<dbReference type="GO" id="GO:0030527">
    <property type="term" value="F:structural constituent of chromatin"/>
    <property type="evidence" value="ECO:0007669"/>
    <property type="project" value="InterPro"/>
</dbReference>
<dbReference type="GO" id="GO:0006310">
    <property type="term" value="P:DNA recombination"/>
    <property type="evidence" value="ECO:0007669"/>
    <property type="project" value="UniProtKB-UniRule"/>
</dbReference>
<dbReference type="GO" id="GO:0006355">
    <property type="term" value="P:regulation of DNA-templated transcription"/>
    <property type="evidence" value="ECO:0007669"/>
    <property type="project" value="UniProtKB-UniRule"/>
</dbReference>
<dbReference type="GO" id="GO:0006417">
    <property type="term" value="P:regulation of translation"/>
    <property type="evidence" value="ECO:0007669"/>
    <property type="project" value="UniProtKB-UniRule"/>
</dbReference>
<dbReference type="CDD" id="cd13836">
    <property type="entry name" value="IHF_B"/>
    <property type="match status" value="1"/>
</dbReference>
<dbReference type="FunFam" id="4.10.520.10:FF:000003">
    <property type="entry name" value="Integration host factor subunit beta"/>
    <property type="match status" value="1"/>
</dbReference>
<dbReference type="Gene3D" id="4.10.520.10">
    <property type="entry name" value="IHF-like DNA-binding proteins"/>
    <property type="match status" value="1"/>
</dbReference>
<dbReference type="HAMAP" id="MF_00381">
    <property type="entry name" value="IHF_beta"/>
    <property type="match status" value="1"/>
</dbReference>
<dbReference type="InterPro" id="IPR000119">
    <property type="entry name" value="Hist_DNA-bd"/>
</dbReference>
<dbReference type="InterPro" id="IPR020816">
    <property type="entry name" value="Histone-like_DNA-bd_CS"/>
</dbReference>
<dbReference type="InterPro" id="IPR010992">
    <property type="entry name" value="IHF-like_DNA-bd_dom_sf"/>
</dbReference>
<dbReference type="InterPro" id="IPR005685">
    <property type="entry name" value="IHF_beta"/>
</dbReference>
<dbReference type="NCBIfam" id="TIGR00988">
    <property type="entry name" value="hip"/>
    <property type="match status" value="1"/>
</dbReference>
<dbReference type="NCBIfam" id="NF001222">
    <property type="entry name" value="PRK00199.1"/>
    <property type="match status" value="1"/>
</dbReference>
<dbReference type="PANTHER" id="PTHR33175">
    <property type="entry name" value="DNA-BINDING PROTEIN HU"/>
    <property type="match status" value="1"/>
</dbReference>
<dbReference type="PANTHER" id="PTHR33175:SF5">
    <property type="entry name" value="INTEGRATION HOST FACTOR SUBUNIT BETA"/>
    <property type="match status" value="1"/>
</dbReference>
<dbReference type="Pfam" id="PF00216">
    <property type="entry name" value="Bac_DNA_binding"/>
    <property type="match status" value="1"/>
</dbReference>
<dbReference type="PRINTS" id="PR01727">
    <property type="entry name" value="DNABINDINGHU"/>
</dbReference>
<dbReference type="SMART" id="SM00411">
    <property type="entry name" value="BHL"/>
    <property type="match status" value="1"/>
</dbReference>
<dbReference type="SUPFAM" id="SSF47729">
    <property type="entry name" value="IHF-like DNA-binding proteins"/>
    <property type="match status" value="1"/>
</dbReference>
<dbReference type="PROSITE" id="PS00045">
    <property type="entry name" value="HISTONE_LIKE"/>
    <property type="match status" value="1"/>
</dbReference>
<name>IHFB_PSEE4</name>
<evidence type="ECO:0000255" key="1">
    <source>
        <dbReference type="HAMAP-Rule" id="MF_00381"/>
    </source>
</evidence>
<sequence length="98" mass="11114">MTKSELIDRIVTHQGLLSSKDVELAIKTMLEQMSQCLATGDRIEIRGFGSFSLHYRAPRVGRNPKTGQSVSLEGKYVPHFKPGKELRDRVNEEEHVPH</sequence>
<reference key="1">
    <citation type="journal article" date="2006" name="Nat. Biotechnol.">
        <title>Complete genome sequence of the entomopathogenic and metabolically versatile soil bacterium Pseudomonas entomophila.</title>
        <authorList>
            <person name="Vodovar N."/>
            <person name="Vallenet D."/>
            <person name="Cruveiller S."/>
            <person name="Rouy Z."/>
            <person name="Barbe V."/>
            <person name="Acosta C."/>
            <person name="Cattolico L."/>
            <person name="Jubin C."/>
            <person name="Lajus A."/>
            <person name="Segurens B."/>
            <person name="Vacherie B."/>
            <person name="Wincker P."/>
            <person name="Weissenbach J."/>
            <person name="Lemaitre B."/>
            <person name="Medigue C."/>
            <person name="Boccard F."/>
        </authorList>
    </citation>
    <scope>NUCLEOTIDE SEQUENCE [LARGE SCALE GENOMIC DNA]</scope>
    <source>
        <strain>L48</strain>
    </source>
</reference>
<accession>Q1ID97</accession>
<protein>
    <recommendedName>
        <fullName evidence="1">Integration host factor subunit beta</fullName>
        <shortName evidence="1">IHF-beta</shortName>
    </recommendedName>
</protein>
<feature type="chain" id="PRO_1000060632" description="Integration host factor subunit beta">
    <location>
        <begin position="1"/>
        <end position="98"/>
    </location>
</feature>